<dbReference type="EC" id="7.1.1.-" evidence="1"/>
<dbReference type="EMBL" id="AP009552">
    <property type="protein sequence ID" value="BAG05417.1"/>
    <property type="molecule type" value="Genomic_DNA"/>
</dbReference>
<dbReference type="RefSeq" id="WP_012267874.1">
    <property type="nucleotide sequence ID" value="NC_010296.1"/>
</dbReference>
<dbReference type="SMR" id="B0JHK5"/>
<dbReference type="STRING" id="449447.MAE_55950"/>
<dbReference type="PaxDb" id="449447-MAE_55950"/>
<dbReference type="EnsemblBacteria" id="BAG05417">
    <property type="protein sequence ID" value="BAG05417"/>
    <property type="gene ID" value="MAE_55950"/>
</dbReference>
<dbReference type="KEGG" id="mar:MAE_55950"/>
<dbReference type="PATRIC" id="fig|449447.4.peg.5107"/>
<dbReference type="eggNOG" id="COG1007">
    <property type="taxonomic scope" value="Bacteria"/>
</dbReference>
<dbReference type="HOGENOM" id="CLU_007100_1_5_3"/>
<dbReference type="BioCyc" id="MAER449447:MAE_RS24330-MONOMER"/>
<dbReference type="Proteomes" id="UP000001510">
    <property type="component" value="Chromosome"/>
</dbReference>
<dbReference type="GO" id="GO:0031676">
    <property type="term" value="C:plasma membrane-derived thylakoid membrane"/>
    <property type="evidence" value="ECO:0007669"/>
    <property type="project" value="UniProtKB-SubCell"/>
</dbReference>
<dbReference type="GO" id="GO:0008137">
    <property type="term" value="F:NADH dehydrogenase (ubiquinone) activity"/>
    <property type="evidence" value="ECO:0007669"/>
    <property type="project" value="InterPro"/>
</dbReference>
<dbReference type="GO" id="GO:0048038">
    <property type="term" value="F:quinone binding"/>
    <property type="evidence" value="ECO:0007669"/>
    <property type="project" value="UniProtKB-KW"/>
</dbReference>
<dbReference type="GO" id="GO:0042773">
    <property type="term" value="P:ATP synthesis coupled electron transport"/>
    <property type="evidence" value="ECO:0007669"/>
    <property type="project" value="InterPro"/>
</dbReference>
<dbReference type="GO" id="GO:0019684">
    <property type="term" value="P:photosynthesis, light reaction"/>
    <property type="evidence" value="ECO:0007669"/>
    <property type="project" value="UniProtKB-UniRule"/>
</dbReference>
<dbReference type="HAMAP" id="MF_00445">
    <property type="entry name" value="NDH1_NuoN_1"/>
    <property type="match status" value="1"/>
</dbReference>
<dbReference type="InterPro" id="IPR010096">
    <property type="entry name" value="NADH-Q_OxRdtase_suN/2"/>
</dbReference>
<dbReference type="InterPro" id="IPR001750">
    <property type="entry name" value="ND/Mrp_TM"/>
</dbReference>
<dbReference type="InterPro" id="IPR045693">
    <property type="entry name" value="Ndh2_N"/>
</dbReference>
<dbReference type="NCBIfam" id="TIGR01770">
    <property type="entry name" value="NDH_I_N"/>
    <property type="match status" value="1"/>
</dbReference>
<dbReference type="NCBIfam" id="NF002701">
    <property type="entry name" value="PRK02504.1"/>
    <property type="match status" value="1"/>
</dbReference>
<dbReference type="PANTHER" id="PTHR22773">
    <property type="entry name" value="NADH DEHYDROGENASE"/>
    <property type="match status" value="1"/>
</dbReference>
<dbReference type="Pfam" id="PF19530">
    <property type="entry name" value="Ndh2_N"/>
    <property type="match status" value="1"/>
</dbReference>
<dbReference type="Pfam" id="PF00361">
    <property type="entry name" value="Proton_antipo_M"/>
    <property type="match status" value="1"/>
</dbReference>
<dbReference type="PRINTS" id="PR01434">
    <property type="entry name" value="NADHDHGNASE5"/>
</dbReference>
<proteinExistence type="inferred from homology"/>
<accession>B0JHK5</accession>
<protein>
    <recommendedName>
        <fullName evidence="1">NAD(P)H-quinone oxidoreductase subunit 2</fullName>
        <ecNumber evidence="1">7.1.1.-</ecNumber>
    </recommendedName>
    <alternativeName>
        <fullName evidence="1">NAD(P)H dehydrogenase subunit 2</fullName>
    </alternativeName>
    <alternativeName>
        <fullName evidence="1">NADH-plastoquinone oxidoreductase subunit 2</fullName>
    </alternativeName>
    <alternativeName>
        <fullName evidence="1">NDH-1, subunit 2</fullName>
    </alternativeName>
</protein>
<evidence type="ECO:0000255" key="1">
    <source>
        <dbReference type="HAMAP-Rule" id="MF_00445"/>
    </source>
</evidence>
<gene>
    <name evidence="1" type="primary">ndhB</name>
    <name type="ordered locus">MAE_55950</name>
</gene>
<sequence>MDFSSLVASQLNAGVIWPEGILIITLMVILIGDLIVGRSARSWLPYVAIAGLLAAVVALYFTWDNPKPVAFLGAFEGDNLSIVFRAIIALSTASTVLMSIRYVEQAGTSLAEFLAIMLTATLGGMFLSGASELVMIFISLEMLSISSYLMTGYMKRDPRSNEAALKYLLIGASSSAIFLYGVSLLYGLSGGETSLSAIAQKLTDVNGGQSLALAIALVFVIAGIAFKISAVPFHQWTPDVYEGSPTPVVAFLSVGSKAAGFALAIRLLVTVFGLVSEQWRFIFIALAILSMILGNVVALAQTSMKRMLAYSSIGQAGFVMIGLTAGTDAGYSSMIFYLLIYLFMNLGAFACVILFALRTGTDQIAEYSGLYQKDPLLTLCLSICLLSLGGIPPLAGFFGKIYLFWAGWQAGLYALVLVGLVTSVASIYYYIRVVKMMVVKEPQEMSDAVKNYPVINWTLTGMRPLQVGIVLSLVATSLAGILSNPLFTLATDSVTTTPILQSAALATHISRAN</sequence>
<keyword id="KW-0472">Membrane</keyword>
<keyword id="KW-0520">NAD</keyword>
<keyword id="KW-0521">NADP</keyword>
<keyword id="KW-0618">Plastoquinone</keyword>
<keyword id="KW-0874">Quinone</keyword>
<keyword id="KW-0793">Thylakoid</keyword>
<keyword id="KW-1278">Translocase</keyword>
<keyword id="KW-0812">Transmembrane</keyword>
<keyword id="KW-1133">Transmembrane helix</keyword>
<keyword id="KW-0813">Transport</keyword>
<comment type="function">
    <text evidence="1">NDH-1 shuttles electrons from an unknown electron donor, via FMN and iron-sulfur (Fe-S) centers, to quinones in the respiratory and/or the photosynthetic chain. The immediate electron acceptor for the enzyme in this species is believed to be plastoquinone. Couples the redox reaction to proton translocation, and thus conserves the redox energy in a proton gradient. Cyanobacterial NDH-1 also plays a role in inorganic carbon-concentration.</text>
</comment>
<comment type="catalytic activity">
    <reaction evidence="1">
        <text>a plastoquinone + NADH + (n+1) H(+)(in) = a plastoquinol + NAD(+) + n H(+)(out)</text>
        <dbReference type="Rhea" id="RHEA:42608"/>
        <dbReference type="Rhea" id="RHEA-COMP:9561"/>
        <dbReference type="Rhea" id="RHEA-COMP:9562"/>
        <dbReference type="ChEBI" id="CHEBI:15378"/>
        <dbReference type="ChEBI" id="CHEBI:17757"/>
        <dbReference type="ChEBI" id="CHEBI:57540"/>
        <dbReference type="ChEBI" id="CHEBI:57945"/>
        <dbReference type="ChEBI" id="CHEBI:62192"/>
    </reaction>
</comment>
<comment type="catalytic activity">
    <reaction evidence="1">
        <text>a plastoquinone + NADPH + (n+1) H(+)(in) = a plastoquinol + NADP(+) + n H(+)(out)</text>
        <dbReference type="Rhea" id="RHEA:42612"/>
        <dbReference type="Rhea" id="RHEA-COMP:9561"/>
        <dbReference type="Rhea" id="RHEA-COMP:9562"/>
        <dbReference type="ChEBI" id="CHEBI:15378"/>
        <dbReference type="ChEBI" id="CHEBI:17757"/>
        <dbReference type="ChEBI" id="CHEBI:57783"/>
        <dbReference type="ChEBI" id="CHEBI:58349"/>
        <dbReference type="ChEBI" id="CHEBI:62192"/>
    </reaction>
</comment>
<comment type="subunit">
    <text evidence="1">NDH-1 can be composed of about 15 different subunits; different subcomplexes with different compositions have been identified which probably have different functions.</text>
</comment>
<comment type="subcellular location">
    <subcellularLocation>
        <location evidence="1">Cellular thylakoid membrane</location>
        <topology evidence="1">Multi-pass membrane protein</topology>
    </subcellularLocation>
</comment>
<comment type="similarity">
    <text evidence="1">Belongs to the complex I subunit 2 family.</text>
</comment>
<name>NU2C_MICAN</name>
<organism>
    <name type="scientific">Microcystis aeruginosa (strain NIES-843 / IAM M-2473)</name>
    <dbReference type="NCBI Taxonomy" id="449447"/>
    <lineage>
        <taxon>Bacteria</taxon>
        <taxon>Bacillati</taxon>
        <taxon>Cyanobacteriota</taxon>
        <taxon>Cyanophyceae</taxon>
        <taxon>Oscillatoriophycideae</taxon>
        <taxon>Chroococcales</taxon>
        <taxon>Microcystaceae</taxon>
        <taxon>Microcystis</taxon>
    </lineage>
</organism>
<feature type="chain" id="PRO_1000124732" description="NAD(P)H-quinone oxidoreductase subunit 2">
    <location>
        <begin position="1"/>
        <end position="513"/>
    </location>
</feature>
<feature type="transmembrane region" description="Helical" evidence="1">
    <location>
        <begin position="15"/>
        <end position="35"/>
    </location>
</feature>
<feature type="transmembrane region" description="Helical" evidence="1">
    <location>
        <begin position="43"/>
        <end position="63"/>
    </location>
</feature>
<feature type="transmembrane region" description="Helical" evidence="1">
    <location>
        <begin position="80"/>
        <end position="100"/>
    </location>
</feature>
<feature type="transmembrane region" description="Helical" evidence="1">
    <location>
        <begin position="110"/>
        <end position="130"/>
    </location>
</feature>
<feature type="transmembrane region" description="Helical" evidence="1">
    <location>
        <begin position="133"/>
        <end position="153"/>
    </location>
</feature>
<feature type="transmembrane region" description="Helical" evidence="1">
    <location>
        <begin position="168"/>
        <end position="188"/>
    </location>
</feature>
<feature type="transmembrane region" description="Helical" evidence="1">
    <location>
        <begin position="211"/>
        <end position="231"/>
    </location>
</feature>
<feature type="transmembrane region" description="Helical" evidence="1">
    <location>
        <begin position="245"/>
        <end position="265"/>
    </location>
</feature>
<feature type="transmembrane region" description="Helical" evidence="1">
    <location>
        <begin position="281"/>
        <end position="301"/>
    </location>
</feature>
<feature type="transmembrane region" description="Helical" evidence="1">
    <location>
        <begin position="307"/>
        <end position="327"/>
    </location>
</feature>
<feature type="transmembrane region" description="Helical" evidence="1">
    <location>
        <begin position="335"/>
        <end position="355"/>
    </location>
</feature>
<feature type="transmembrane region" description="Helical" evidence="1">
    <location>
        <begin position="379"/>
        <end position="399"/>
    </location>
</feature>
<feature type="transmembrane region" description="Helical" evidence="1">
    <location>
        <begin position="401"/>
        <end position="421"/>
    </location>
</feature>
<feature type="transmembrane region" description="Helical" evidence="1">
    <location>
        <begin position="467"/>
        <end position="487"/>
    </location>
</feature>
<reference key="1">
    <citation type="journal article" date="2007" name="DNA Res.">
        <title>Complete genomic structure of the bloom-forming toxic cyanobacterium Microcystis aeruginosa NIES-843.</title>
        <authorList>
            <person name="Kaneko T."/>
            <person name="Nakajima N."/>
            <person name="Okamoto S."/>
            <person name="Suzuki I."/>
            <person name="Tanabe Y."/>
            <person name="Tamaoki M."/>
            <person name="Nakamura Y."/>
            <person name="Kasai F."/>
            <person name="Watanabe A."/>
            <person name="Kawashima K."/>
            <person name="Kishida Y."/>
            <person name="Ono A."/>
            <person name="Shimizu Y."/>
            <person name="Takahashi C."/>
            <person name="Minami C."/>
            <person name="Fujishiro T."/>
            <person name="Kohara M."/>
            <person name="Katoh M."/>
            <person name="Nakazaki N."/>
            <person name="Nakayama S."/>
            <person name="Yamada M."/>
            <person name="Tabata S."/>
            <person name="Watanabe M.M."/>
        </authorList>
    </citation>
    <scope>NUCLEOTIDE SEQUENCE [LARGE SCALE GENOMIC DNA]</scope>
    <source>
        <strain>NIES-843 / IAM M-247</strain>
    </source>
</reference>